<protein>
    <recommendedName>
        <fullName evidence="11">Protein-arginine N-acetylglucosaminyltransferase SseK1</fullName>
        <shortName evidence="11">Arginine GlcNAcyltransferase SseK1</shortName>
        <ecNumber evidence="3 5 8">2.4.1.-</ecNumber>
    </recommendedName>
    <alternativeName>
        <fullName evidence="9">Salmonella secreted effector K1</fullName>
    </alternativeName>
</protein>
<sequence>MIPPLNRYVPALSKNELVKTVTNRDIQFTSFNGKDYPLCFLDEKTPLLFQWFERNPARFGKNDIPIINTEKNPYLNNIIKAATIEKERLIGIFVDGDFFPGQKDAFSKLEYDYENIKVIYRNDIDFSMYDKKLSEIYMENISKQESMPEEKRDCHLLQLLKKELSDIQEGNDSLIKSYLLDKGHGWFDFYRNMAMLKAGQLFLEADKVGCYDLSTNSGCIYLDADMIITEKLGGIYIPDGIAVHVERIDGRASMENGIIAVDRNNHPALLAGLEIMHTKFDADPYSDGVCNGIRKHFNYSLNEDYNSFCDFIEFKHDNIIMNTSQFTQSSWARHVQ</sequence>
<comment type="function">
    <text evidence="3 5 6 8">Protein-arginine N-acetylglucosaminyltransferase effector that disrupts TNF signaling in infected cells, including NF-kappa-B signaling, apoptosis and necroptosis (PubMed:23955153, PubMed:28069818, PubMed:28522607). Acts by catalyzing the transfer of a single N-acetylglucosamine (GlcNAc) to a conserved arginine residue in the death domain of host proteins TRADD and, to a lower extent, FADD: arginine GlcNAcylation prevents homotypic/heterotypic death domain interactions and assembly of the oligomeric TNF-alpha receptor complex, thereby disrupting TNF signaling (PubMed:23955153, PubMed:28069818). Also acts on host proteins without a death domain: catalyzes arginine GlcNAcylation of host GAPDH protein, thereby preventing GAPDH interaction with TRAF2, leading to inhibit NF-kappa-B signaling (PubMed:28522607). Catalyzes GlcNAcylation of host tubulin-folding cofactor TBCB, thereby promoting microtubule stability (PubMed:32366039). Also mediates auto-GlcNAcylation, which is required for activity toward death domain-containing host target proteins (PubMed:32366039).</text>
</comment>
<comment type="catalytic activity">
    <reaction evidence="3 5 8">
        <text>L-arginyl-[protein] + UDP-N-acetyl-alpha-D-glucosamine = N(omega)-(N-acetyl-beta-D-glucosaminyl)-L-arginyl-[protein] + UDP + H(+)</text>
        <dbReference type="Rhea" id="RHEA:66632"/>
        <dbReference type="Rhea" id="RHEA-COMP:10532"/>
        <dbReference type="Rhea" id="RHEA-COMP:17079"/>
        <dbReference type="ChEBI" id="CHEBI:15378"/>
        <dbReference type="ChEBI" id="CHEBI:29965"/>
        <dbReference type="ChEBI" id="CHEBI:57705"/>
        <dbReference type="ChEBI" id="CHEBI:58223"/>
        <dbReference type="ChEBI" id="CHEBI:167322"/>
    </reaction>
    <physiologicalReaction direction="left-to-right" evidence="3 5 8">
        <dbReference type="Rhea" id="RHEA:66633"/>
    </physiologicalReaction>
</comment>
<comment type="cofactor">
    <cofactor evidence="1">
        <name>Mn(2+)</name>
        <dbReference type="ChEBI" id="CHEBI:29035"/>
    </cofactor>
</comment>
<comment type="activity regulation">
    <text evidence="7">Protein-arginine N-acetylglucosaminyltransferase activity is inhibited by 100066N compound (flavone analog) and 102644N compound (a substituted isoxazole).</text>
</comment>
<comment type="subcellular location">
    <subcellularLocation>
        <location evidence="2 4">Secreted</location>
    </subcellularLocation>
    <subcellularLocation>
        <location evidence="2 5">Host cytoplasm</location>
        <location evidence="2 5">Host cytosol</location>
    </subcellularLocation>
    <text evidence="4">Secreted via type III secretion systems 1 and 2 (SPI-1 and SPI-2 T3SS).</text>
</comment>
<comment type="induction">
    <text evidence="4">Transcription is dependent on PhoP/PhoQ two-component system.</text>
</comment>
<comment type="domain">
    <text evidence="1">Adopts a GT-A fold and acts as an inverting enzyme that converts the alpha-configuration in the UDP-N-acetyl-alpha-D-glucosamine donor to the beta configuration in the N-linked (GlcNAc) arginine product.</text>
</comment>
<comment type="PTM">
    <text evidence="1">Auto-glycosylated: arginine GlcNAcylation is required for activity toward death domain-containing host target proteins.</text>
</comment>
<comment type="similarity">
    <text evidence="11">Belongs to the glycosyltransferase NleB family.</text>
</comment>
<feature type="chain" id="PRO_0000452596" description="Protein-arginine N-acetylglucosaminyltransferase SseK1">
    <location>
        <begin position="1"/>
        <end position="336"/>
    </location>
</feature>
<feature type="short sequence motif" description="DXD motif" evidence="11">
    <location>
        <begin position="223"/>
        <end position="225"/>
    </location>
</feature>
<feature type="active site" description="Proton acceptor" evidence="1">
    <location>
        <position position="255"/>
    </location>
</feature>
<feature type="binding site" evidence="1">
    <location>
        <begin position="50"/>
        <end position="52"/>
    </location>
    <ligand>
        <name>UDP-N-acetyl-alpha-D-glucosamine</name>
        <dbReference type="ChEBI" id="CHEBI:57705"/>
    </ligand>
</feature>
<feature type="binding site" evidence="1">
    <location>
        <position position="74"/>
    </location>
    <ligand>
        <name>UDP-N-acetyl-alpha-D-glucosamine</name>
        <dbReference type="ChEBI" id="CHEBI:57705"/>
    </ligand>
</feature>
<feature type="binding site" evidence="1">
    <location>
        <begin position="224"/>
        <end position="225"/>
    </location>
    <ligand>
        <name>UDP-N-acetyl-alpha-D-glucosamine</name>
        <dbReference type="ChEBI" id="CHEBI:57705"/>
    </ligand>
</feature>
<feature type="binding site" evidence="1">
    <location>
        <position position="225"/>
    </location>
    <ligand>
        <name>Mn(2+)</name>
        <dbReference type="ChEBI" id="CHEBI:29035"/>
    </ligand>
</feature>
<feature type="binding site" evidence="1">
    <location>
        <position position="322"/>
    </location>
    <ligand>
        <name>Mn(2+)</name>
        <dbReference type="ChEBI" id="CHEBI:29035"/>
    </ligand>
</feature>
<feature type="binding site" evidence="1">
    <location>
        <position position="324"/>
    </location>
    <ligand>
        <name>Mn(2+)</name>
        <dbReference type="ChEBI" id="CHEBI:29035"/>
    </ligand>
</feature>
<feature type="binding site" evidence="1">
    <location>
        <position position="324"/>
    </location>
    <ligand>
        <name>UDP-N-acetyl-alpha-D-glucosamine</name>
        <dbReference type="ChEBI" id="CHEBI:57705"/>
    </ligand>
</feature>
<feature type="binding site" evidence="1">
    <location>
        <position position="329"/>
    </location>
    <ligand>
        <name>UDP-N-acetyl-alpha-D-glucosamine</name>
        <dbReference type="ChEBI" id="CHEBI:57705"/>
    </ligand>
</feature>
<feature type="glycosylation site" description="N-beta-linked (GlcNAc) arginine; by autocatalysis" evidence="1">
    <location>
        <position position="24"/>
    </location>
</feature>
<feature type="glycosylation site" description="N-beta-linked (GlcNAc) arginine; by autocatalysis" evidence="1">
    <location>
        <position position="152"/>
    </location>
</feature>
<feature type="glycosylation site" description="N-beta-linked (GlcNAc) arginine; by autocatalysis" evidence="1">
    <location>
        <position position="333"/>
    </location>
</feature>
<feature type="mutagenesis site" description="Abolished protein-arginine N-acetylglucosaminyltransferase activity." evidence="8">
    <original>DAD</original>
    <variation>AAA</variation>
    <location>
        <begin position="223"/>
        <end position="225"/>
    </location>
</feature>
<reference key="1">
    <citation type="journal article" date="2001" name="Nature">
        <title>Complete genome sequence of Salmonella enterica serovar Typhimurium LT2.</title>
        <authorList>
            <person name="McClelland M."/>
            <person name="Sanderson K.E."/>
            <person name="Spieth J."/>
            <person name="Clifton S.W."/>
            <person name="Latreille P."/>
            <person name="Courtney L."/>
            <person name="Porwollik S."/>
            <person name="Ali J."/>
            <person name="Dante M."/>
            <person name="Du F."/>
            <person name="Hou S."/>
            <person name="Layman D."/>
            <person name="Leonard S."/>
            <person name="Nguyen C."/>
            <person name="Scott K."/>
            <person name="Holmes A."/>
            <person name="Grewal N."/>
            <person name="Mulvaney E."/>
            <person name="Ryan E."/>
            <person name="Sun H."/>
            <person name="Florea L."/>
            <person name="Miller W."/>
            <person name="Stoneking T."/>
            <person name="Nhan M."/>
            <person name="Waterston R."/>
            <person name="Wilson R.K."/>
        </authorList>
    </citation>
    <scope>NUCLEOTIDE SEQUENCE [LARGE SCALE GENOMIC DNA]</scope>
    <source>
        <strain>LT2 / SGSC1412 / ATCC 700720</strain>
    </source>
</reference>
<reference key="2">
    <citation type="journal article" date="2004" name="Infect. Immun.">
        <title>SseK1 and SseK2 are novel translocated proteins of Salmonella enterica serovar typhimurium.</title>
        <authorList>
            <person name="Kujat Choy S.L."/>
            <person name="Boyle E.C."/>
            <person name="Gal-Mor O."/>
            <person name="Goode D.L."/>
            <person name="Valdez Y."/>
            <person name="Vallance B.A."/>
            <person name="Finlay B.B."/>
        </authorList>
    </citation>
    <scope>SUBCELLULAR LOCATION</scope>
    <source>
        <strain>LT2 / SGSC1412 / ATCC 700720</strain>
    </source>
</reference>
<reference key="3">
    <citation type="journal article" date="2013" name="Nature">
        <title>Pathogen blocks host death receptor signalling by arginine GlcNAcylation of death domains.</title>
        <authorList>
            <person name="Li S."/>
            <person name="Zhang L."/>
            <person name="Yao Q."/>
            <person name="Li L."/>
            <person name="Dong N."/>
            <person name="Rong J."/>
            <person name="Gao W."/>
            <person name="Ding X."/>
            <person name="Sun L."/>
            <person name="Chen X."/>
            <person name="Chen S."/>
            <person name="Shao F."/>
        </authorList>
    </citation>
    <scope>FUNCTION</scope>
    <scope>CATALYTIC ACTIVITY</scope>
    <source>
        <strain>LT2 / SGSC1412 / ATCC 700720</strain>
    </source>
</reference>
<reference key="4">
    <citation type="journal article" date="2015" name="Front. Microbiol.">
        <title>Host cell type-dependent translocation and PhoP-mediated positive regulation of the effector SseK1 of Salmonella enterica.</title>
        <authorList>
            <person name="Baison-Olmo F."/>
            <person name="Galindo-Moreno M."/>
            <person name="Ramos-Morales F."/>
        </authorList>
    </citation>
    <scope>SUBCELLULAR LOCATION</scope>
    <scope>INDUCTION</scope>
    <source>
        <strain>LT2 / SGSC1412 / ATCC 700720</strain>
    </source>
</reference>
<reference key="5">
    <citation type="journal article" date="2017" name="J. Biol. Chem.">
        <title>NleB/SseK effectors from Citrobacter rodentium, Escherichia coli, and Salmonella enterica display distinct differences in host substrate specificity.</title>
        <authorList>
            <person name="El Qaidi S."/>
            <person name="Chen K."/>
            <person name="Halim A."/>
            <person name="Siukstaite L."/>
            <person name="Rueter C."/>
            <person name="Hurtado-Guerrero R."/>
            <person name="Clausen H."/>
            <person name="Hardwidge P.R."/>
        </authorList>
    </citation>
    <scope>FUNCTION</scope>
    <source>
        <strain>LT2 / SGSC1412 / ATCC 700720</strain>
    </source>
</reference>
<reference key="6">
    <citation type="journal article" date="2017" name="Infect. Immun.">
        <title>SseK1 and SseK3 type III secretion system effectors inhibit NF-kappaB signaling and necroptotic cell death in salmonella-infected macrophages.</title>
        <authorList>
            <person name="Guenster R.A."/>
            <person name="Matthews S.A."/>
            <person name="Holden D.W."/>
            <person name="Thurston T.L.M."/>
        </authorList>
    </citation>
    <scope>FUNCTION</scope>
    <scope>CATALYTIC ACTIVITY</scope>
    <scope>SUBCELLULAR LOCATION</scope>
    <source>
        <strain>ATCC 14028 / SGSC 2980 / CDC 6516-60 / NCTC 12023</strain>
    </source>
</reference>
<reference key="7">
    <citation type="journal article" date="2018" name="Front. Cell. Infect. Microbiol.">
        <title>High-throughput screening for bacterial glycosyltransferase inhibitors.</title>
        <authorList>
            <person name="El Qaidi S."/>
            <person name="Zhu C."/>
            <person name="McDonald P."/>
            <person name="Roy A."/>
            <person name="Maity P.K."/>
            <person name="Rane D."/>
            <person name="Perera C."/>
            <person name="Hardwidge P.R."/>
        </authorList>
    </citation>
    <scope>ACTIVITY REGULATION</scope>
    <source>
        <strain>LT2 / SGSC1412 / ATCC 700720</strain>
    </source>
</reference>
<reference key="8">
    <citation type="journal article" date="2020" name="Int. J. Mol. Sci.">
        <title>Tubulin folding cofactor TBCB is a target of the salmonella effector protein SseK1.</title>
        <authorList>
            <person name="Araujo-Garrido J.L."/>
            <person name="Baison-Olmo F."/>
            <person name="Bernal-Bayard J."/>
            <person name="Romero F."/>
            <person name="Ramos-Morales F."/>
        </authorList>
    </citation>
    <scope>FUNCTION</scope>
    <scope>AUTOGLYCOSYLATION</scope>
    <scope>CATALYTIC ACTIVITY</scope>
    <scope>MUTAGENESIS OF 223-ASP--ASP-225</scope>
    <source>
        <strain>LT2 / SGSC1412 / ATCC 700720</strain>
    </source>
</reference>
<accession>Q9L9J3</accession>
<accession>Q7BPM9</accession>
<proteinExistence type="evidence at protein level"/>
<evidence type="ECO:0000250" key="1">
    <source>
        <dbReference type="UniProtKB" id="A0A0H3NK84"/>
    </source>
</evidence>
<evidence type="ECO:0000269" key="2">
    <source>
    </source>
</evidence>
<evidence type="ECO:0000269" key="3">
    <source>
    </source>
</evidence>
<evidence type="ECO:0000269" key="4">
    <source>
    </source>
</evidence>
<evidence type="ECO:0000269" key="5">
    <source>
    </source>
</evidence>
<evidence type="ECO:0000269" key="6">
    <source>
    </source>
</evidence>
<evidence type="ECO:0000269" key="7">
    <source>
    </source>
</evidence>
<evidence type="ECO:0000269" key="8">
    <source>
    </source>
</evidence>
<evidence type="ECO:0000303" key="9">
    <source>
    </source>
</evidence>
<evidence type="ECO:0000303" key="10">
    <source>
    </source>
</evidence>
<evidence type="ECO:0000305" key="11"/>
<evidence type="ECO:0000312" key="12">
    <source>
        <dbReference type="EMBL" id="AAF33527.1"/>
    </source>
</evidence>
<evidence type="ECO:0000312" key="13">
    <source>
        <dbReference type="EMBL" id="AAL22985.1"/>
    </source>
</evidence>
<name>SSEK1_SALTY</name>
<dbReference type="EC" id="2.4.1.-" evidence="3 5 8"/>
<dbReference type="EMBL" id="AF170176">
    <property type="protein sequence ID" value="AAF33527.1"/>
    <property type="molecule type" value="Genomic_DNA"/>
</dbReference>
<dbReference type="EMBL" id="AE006468">
    <property type="protein sequence ID" value="AAL22985.1"/>
    <property type="molecule type" value="Genomic_DNA"/>
</dbReference>
<dbReference type="RefSeq" id="NP_463026.1">
    <property type="nucleotide sequence ID" value="NC_003197.2"/>
</dbReference>
<dbReference type="RefSeq" id="WP_010989090.1">
    <property type="nucleotide sequence ID" value="NC_003197.2"/>
</dbReference>
<dbReference type="SMR" id="Q9L9J3"/>
<dbReference type="STRING" id="99287.STM4157"/>
<dbReference type="GlyCosmos" id="Q9L9J3">
    <property type="glycosylation" value="3 sites, No reported glycans"/>
</dbReference>
<dbReference type="PaxDb" id="99287-STM4157"/>
<dbReference type="GeneID" id="1255683"/>
<dbReference type="KEGG" id="stm:STM4157"/>
<dbReference type="PATRIC" id="fig|99287.12.peg.4370"/>
<dbReference type="HOGENOM" id="CLU_081850_0_0_6"/>
<dbReference type="OMA" id="KGHVWFD"/>
<dbReference type="PhylomeDB" id="Q9L9J3"/>
<dbReference type="BioCyc" id="SENT99287:STM4157-MONOMER"/>
<dbReference type="Proteomes" id="UP000001014">
    <property type="component" value="Chromosome"/>
</dbReference>
<dbReference type="GO" id="GO:0005576">
    <property type="term" value="C:extracellular region"/>
    <property type="evidence" value="ECO:0007669"/>
    <property type="project" value="UniProtKB-SubCell"/>
</dbReference>
<dbReference type="GO" id="GO:0044164">
    <property type="term" value="C:host cell cytosol"/>
    <property type="evidence" value="ECO:0000314"/>
    <property type="project" value="UniProtKB"/>
</dbReference>
<dbReference type="GO" id="GO:0046872">
    <property type="term" value="F:metal ion binding"/>
    <property type="evidence" value="ECO:0007669"/>
    <property type="project" value="UniProtKB-KW"/>
</dbReference>
<dbReference type="GO" id="GO:0106362">
    <property type="term" value="F:protein-arginine N-acetylglucosaminyltransferase activity"/>
    <property type="evidence" value="ECO:0000314"/>
    <property type="project" value="UniProtKB"/>
</dbReference>
<dbReference type="GO" id="GO:0090729">
    <property type="term" value="F:toxin activity"/>
    <property type="evidence" value="ECO:0000315"/>
    <property type="project" value="UniProtKB"/>
</dbReference>
<dbReference type="NCBIfam" id="NF011911">
    <property type="entry name" value="PRK15384.1"/>
    <property type="match status" value="1"/>
</dbReference>
<dbReference type="Pfam" id="PF24688">
    <property type="entry name" value="SseK_NleB"/>
    <property type="match status" value="1"/>
</dbReference>
<gene>
    <name evidence="9 10" type="primary">sseK1</name>
    <name evidence="13" type="ordered locus">STM4157</name>
    <name evidence="12" type="ORF">STMF1.17</name>
</gene>
<organism>
    <name type="scientific">Salmonella typhimurium (strain LT2 / SGSC1412 / ATCC 700720)</name>
    <dbReference type="NCBI Taxonomy" id="99287"/>
    <lineage>
        <taxon>Bacteria</taxon>
        <taxon>Pseudomonadati</taxon>
        <taxon>Pseudomonadota</taxon>
        <taxon>Gammaproteobacteria</taxon>
        <taxon>Enterobacterales</taxon>
        <taxon>Enterobacteriaceae</taxon>
        <taxon>Salmonella</taxon>
    </lineage>
</organism>
<keyword id="KW-0325">Glycoprotein</keyword>
<keyword id="KW-0328">Glycosyltransferase</keyword>
<keyword id="KW-1035">Host cytoplasm</keyword>
<keyword id="KW-0464">Manganese</keyword>
<keyword id="KW-0479">Metal-binding</keyword>
<keyword id="KW-1185">Reference proteome</keyword>
<keyword id="KW-0964">Secreted</keyword>
<keyword id="KW-0800">Toxin</keyword>
<keyword id="KW-0808">Transferase</keyword>
<keyword id="KW-0843">Virulence</keyword>